<evidence type="ECO:0000255" key="1">
    <source>
        <dbReference type="PROSITE-ProRule" id="PRU00185"/>
    </source>
</evidence>
<evidence type="ECO:0000269" key="2">
    <source>
    </source>
</evidence>
<comment type="function">
    <text evidence="2">Putative transcription factor that acts as a key negative regulator of cell accumulation in shoot and floral meristems. Negatively regulates the size of the WUSCHEL (WUS)-expressing organizing center in inflorescence meristems. May act by down-regulating expression of WUS. Can compensate for mutant ULT1 protein when overexpressed.</text>
</comment>
<comment type="subcellular location">
    <subcellularLocation>
        <location evidence="2">Cytoplasm</location>
    </subcellularLocation>
    <subcellularLocation>
        <location evidence="1 2">Nucleus</location>
    </subcellularLocation>
</comment>
<comment type="tissue specificity">
    <text evidence="2">Expressed in influorescence, pollen and siliques, with a higher expression in influorescence.</text>
</comment>
<comment type="developmental stage">
    <text evidence="2">Specifically expressed during the reproductive developmental stage. Expressed in embryonic shoot apical meristems, in inflorescence and floral meristems, and in developing stamens, carpels and ovules.</text>
</comment>
<dbReference type="EMBL" id="AC006234">
    <property type="protein sequence ID" value="AAM15197.1"/>
    <property type="molecule type" value="Genomic_DNA"/>
</dbReference>
<dbReference type="EMBL" id="CP002685">
    <property type="protein sequence ID" value="AEC07081.1"/>
    <property type="molecule type" value="Genomic_DNA"/>
</dbReference>
<dbReference type="EMBL" id="AY219049">
    <property type="protein sequence ID" value="AAO37139.1"/>
    <property type="molecule type" value="mRNA"/>
</dbReference>
<dbReference type="EMBL" id="AY954793">
    <property type="protein sequence ID" value="AAX55119.1"/>
    <property type="molecule type" value="mRNA"/>
</dbReference>
<dbReference type="RefSeq" id="NP_179677.1">
    <property type="nucleotide sequence ID" value="NM_127650.3"/>
</dbReference>
<dbReference type="BioGRID" id="1967">
    <property type="interactions" value="7"/>
</dbReference>
<dbReference type="FunCoup" id="Q8S8I2">
    <property type="interactions" value="2"/>
</dbReference>
<dbReference type="IntAct" id="Q8S8I2">
    <property type="interactions" value="4"/>
</dbReference>
<dbReference type="STRING" id="3702.Q8S8I2"/>
<dbReference type="PaxDb" id="3702-AT2G20825.1"/>
<dbReference type="ProteomicsDB" id="245312"/>
<dbReference type="EnsemblPlants" id="AT2G20825.1">
    <property type="protein sequence ID" value="AT2G20825.1"/>
    <property type="gene ID" value="AT2G20825"/>
</dbReference>
<dbReference type="GeneID" id="816614"/>
<dbReference type="Gramene" id="AT2G20825.1">
    <property type="protein sequence ID" value="AT2G20825.1"/>
    <property type="gene ID" value="AT2G20825"/>
</dbReference>
<dbReference type="KEGG" id="ath:AT2G20825"/>
<dbReference type="Araport" id="AT2G20825"/>
<dbReference type="TAIR" id="AT2G20825">
    <property type="gene designation" value="ULT2"/>
</dbReference>
<dbReference type="eggNOG" id="ENOG502QUIK">
    <property type="taxonomic scope" value="Eukaryota"/>
</dbReference>
<dbReference type="HOGENOM" id="CLU_100373_0_0_1"/>
<dbReference type="InParanoid" id="Q8S8I2"/>
<dbReference type="OMA" id="CLDFTTN"/>
<dbReference type="OrthoDB" id="660341at2759"/>
<dbReference type="PhylomeDB" id="Q8S8I2"/>
<dbReference type="PRO" id="PR:Q8S8I2"/>
<dbReference type="Proteomes" id="UP000006548">
    <property type="component" value="Chromosome 2"/>
</dbReference>
<dbReference type="ExpressionAtlas" id="Q8S8I2">
    <property type="expression patterns" value="baseline and differential"/>
</dbReference>
<dbReference type="GO" id="GO:0005829">
    <property type="term" value="C:cytosol"/>
    <property type="evidence" value="ECO:0000314"/>
    <property type="project" value="TAIR"/>
</dbReference>
<dbReference type="GO" id="GO:0005634">
    <property type="term" value="C:nucleus"/>
    <property type="evidence" value="ECO:0000314"/>
    <property type="project" value="TAIR"/>
</dbReference>
<dbReference type="GO" id="GO:0003677">
    <property type="term" value="F:DNA binding"/>
    <property type="evidence" value="ECO:0007669"/>
    <property type="project" value="UniProtKB-KW"/>
</dbReference>
<dbReference type="InterPro" id="IPR020533">
    <property type="entry name" value="Developmental_reg_ULTRAPETALA"/>
</dbReference>
<dbReference type="InterPro" id="IPR000770">
    <property type="entry name" value="SAND_dom"/>
</dbReference>
<dbReference type="InterPro" id="IPR057011">
    <property type="entry name" value="ULT1/2_SAND"/>
</dbReference>
<dbReference type="InterPro" id="IPR057012">
    <property type="entry name" value="ULT1/2_Znf"/>
</dbReference>
<dbReference type="PANTHER" id="PTHR34053">
    <property type="entry name" value="PROTEIN ULTRAPETALA 1"/>
    <property type="match status" value="1"/>
</dbReference>
<dbReference type="PANTHER" id="PTHR34053:SF3">
    <property type="entry name" value="PROTEIN ULTRAPETALA 2"/>
    <property type="match status" value="1"/>
</dbReference>
<dbReference type="Pfam" id="PF23292">
    <property type="entry name" value="SAND_ULT1"/>
    <property type="match status" value="1"/>
</dbReference>
<dbReference type="Pfam" id="PF23293">
    <property type="entry name" value="zf_ULT1"/>
    <property type="match status" value="1"/>
</dbReference>
<dbReference type="PROSITE" id="PS50864">
    <property type="entry name" value="SAND"/>
    <property type="match status" value="1"/>
</dbReference>
<sequence>MERECGSKELFSKEELQEISGVHVGDDYVEVMCGCTSHRYGDAVARLKIFSDGELQITCQCTPACLEDKLTPAAFEKHSERETSRNWRNNVWVFIEGDKVPLSKTVLLRYYNKALKNSNVSKVIHRDEFVGCSTCGKERRFRLRSRGECRMHHDAIAEPNWKCCDYPYDKITCEEEEERGSRKVFRGCTRSPSCKGCTSCVCFGCKLCRFSDCNCQTCLDFTTNAKPI</sequence>
<keyword id="KW-0963">Cytoplasm</keyword>
<keyword id="KW-0217">Developmental protein</keyword>
<keyword id="KW-0238">DNA-binding</keyword>
<keyword id="KW-0539">Nucleus</keyword>
<keyword id="KW-1185">Reference proteome</keyword>
<keyword id="KW-0804">Transcription</keyword>
<keyword id="KW-0805">Transcription regulation</keyword>
<feature type="chain" id="PRO_0000074104" description="Protein ULTRAPETALA 2">
    <location>
        <begin position="1"/>
        <end position="228"/>
    </location>
</feature>
<feature type="domain" description="SAND" evidence="1">
    <location>
        <begin position="14"/>
        <end position="121"/>
    </location>
</feature>
<protein>
    <recommendedName>
        <fullName>Protein ULTRAPETALA 2</fullName>
    </recommendedName>
</protein>
<name>ULT2_ARATH</name>
<accession>Q8S8I2</accession>
<accession>Q58G16</accession>
<reference key="1">
    <citation type="journal article" date="1999" name="Nature">
        <title>Sequence and analysis of chromosome 2 of the plant Arabidopsis thaliana.</title>
        <authorList>
            <person name="Lin X."/>
            <person name="Kaul S."/>
            <person name="Rounsley S.D."/>
            <person name="Shea T.P."/>
            <person name="Benito M.-I."/>
            <person name="Town C.D."/>
            <person name="Fujii C.Y."/>
            <person name="Mason T.M."/>
            <person name="Bowman C.L."/>
            <person name="Barnstead M.E."/>
            <person name="Feldblyum T.V."/>
            <person name="Buell C.R."/>
            <person name="Ketchum K.A."/>
            <person name="Lee J.J."/>
            <person name="Ronning C.M."/>
            <person name="Koo H.L."/>
            <person name="Moffat K.S."/>
            <person name="Cronin L.A."/>
            <person name="Shen M."/>
            <person name="Pai G."/>
            <person name="Van Aken S."/>
            <person name="Umayam L."/>
            <person name="Tallon L.J."/>
            <person name="Gill J.E."/>
            <person name="Adams M.D."/>
            <person name="Carrera A.J."/>
            <person name="Creasy T.H."/>
            <person name="Goodman H.M."/>
            <person name="Somerville C.R."/>
            <person name="Copenhaver G.P."/>
            <person name="Preuss D."/>
            <person name="Nierman W.C."/>
            <person name="White O."/>
            <person name="Eisen J.A."/>
            <person name="Salzberg S.L."/>
            <person name="Fraser C.M."/>
            <person name="Venter J.C."/>
        </authorList>
    </citation>
    <scope>NUCLEOTIDE SEQUENCE [LARGE SCALE GENOMIC DNA]</scope>
    <source>
        <strain>cv. Columbia</strain>
    </source>
</reference>
<reference key="2">
    <citation type="journal article" date="2017" name="Plant J.">
        <title>Araport11: a complete reannotation of the Arabidopsis thaliana reference genome.</title>
        <authorList>
            <person name="Cheng C.Y."/>
            <person name="Krishnakumar V."/>
            <person name="Chan A.P."/>
            <person name="Thibaud-Nissen F."/>
            <person name="Schobel S."/>
            <person name="Town C.D."/>
        </authorList>
    </citation>
    <scope>GENOME REANNOTATION</scope>
    <source>
        <strain>cv. Columbia</strain>
    </source>
</reference>
<reference key="3">
    <citation type="journal article" date="2005" name="Plant Physiol.">
        <title>Analysis of the cDNAs of hypothetical genes on Arabidopsis chromosome 2 reveals numerous transcript variants.</title>
        <authorList>
            <person name="Xiao Y.-L."/>
            <person name="Smith S.R."/>
            <person name="Ishmael N."/>
            <person name="Redman J.C."/>
            <person name="Kumar N."/>
            <person name="Monaghan E.L."/>
            <person name="Ayele M."/>
            <person name="Haas B.J."/>
            <person name="Wu H.C."/>
            <person name="Town C.D."/>
        </authorList>
    </citation>
    <scope>NUCLEOTIDE SEQUENCE [LARGE SCALE MRNA]</scope>
    <source>
        <strain>cv. Columbia</strain>
    </source>
</reference>
<reference key="4">
    <citation type="submission" date="2005-03" db="EMBL/GenBank/DDBJ databases">
        <authorList>
            <person name="Underwood B.A."/>
            <person name="Xiao Y.-L."/>
            <person name="Moskal W.A. Jr."/>
            <person name="Monaghan E.L."/>
            <person name="Wang W."/>
            <person name="Redman J.C."/>
            <person name="Wu H.C."/>
            <person name="Utterback T."/>
            <person name="Town C.D."/>
        </authorList>
    </citation>
    <scope>NUCLEOTIDE SEQUENCE [LARGE SCALE MRNA]</scope>
    <source>
        <strain>cv. Columbia</strain>
    </source>
</reference>
<reference key="5">
    <citation type="journal article" date="2005" name="Development">
        <title>ULTRAPETALA1 encodes a SAND domain putative transcriptional regulator that controls shoot and floral meristem activity in Arabidopsis.</title>
        <authorList>
            <person name="Carles C.C."/>
            <person name="Choffnes-Inada D."/>
            <person name="Reville K."/>
            <person name="Lertpiriyapong K."/>
            <person name="Fletcher J.C."/>
        </authorList>
    </citation>
    <scope>FUNCTION</scope>
    <scope>SUBCELLULAR LOCATION</scope>
    <scope>TISSUE SPECIFICITY</scope>
    <scope>DEVELOPMENTAL STAGE</scope>
</reference>
<proteinExistence type="evidence at transcript level"/>
<organism>
    <name type="scientific">Arabidopsis thaliana</name>
    <name type="common">Mouse-ear cress</name>
    <dbReference type="NCBI Taxonomy" id="3702"/>
    <lineage>
        <taxon>Eukaryota</taxon>
        <taxon>Viridiplantae</taxon>
        <taxon>Streptophyta</taxon>
        <taxon>Embryophyta</taxon>
        <taxon>Tracheophyta</taxon>
        <taxon>Spermatophyta</taxon>
        <taxon>Magnoliopsida</taxon>
        <taxon>eudicotyledons</taxon>
        <taxon>Gunneridae</taxon>
        <taxon>Pentapetalae</taxon>
        <taxon>rosids</taxon>
        <taxon>malvids</taxon>
        <taxon>Brassicales</taxon>
        <taxon>Brassicaceae</taxon>
        <taxon>Camelineae</taxon>
        <taxon>Arabidopsis</taxon>
    </lineage>
</organism>
<gene>
    <name type="primary">ULT2</name>
    <name type="ordered locus">At2g20825</name>
    <name type="ORF">F5H14.2</name>
</gene>